<reference key="1">
    <citation type="journal article" date="1999" name="Nature">
        <title>Sequence and analysis of chromosome 4 of the plant Arabidopsis thaliana.</title>
        <authorList>
            <person name="Mayer K.F.X."/>
            <person name="Schueller C."/>
            <person name="Wambutt R."/>
            <person name="Murphy G."/>
            <person name="Volckaert G."/>
            <person name="Pohl T."/>
            <person name="Duesterhoeft A."/>
            <person name="Stiekema W."/>
            <person name="Entian K.-D."/>
            <person name="Terryn N."/>
            <person name="Harris B."/>
            <person name="Ansorge W."/>
            <person name="Brandt P."/>
            <person name="Grivell L.A."/>
            <person name="Rieger M."/>
            <person name="Weichselgartner M."/>
            <person name="de Simone V."/>
            <person name="Obermaier B."/>
            <person name="Mache R."/>
            <person name="Mueller M."/>
            <person name="Kreis M."/>
            <person name="Delseny M."/>
            <person name="Puigdomenech P."/>
            <person name="Watson M."/>
            <person name="Schmidtheini T."/>
            <person name="Reichert B."/>
            <person name="Portetelle D."/>
            <person name="Perez-Alonso M."/>
            <person name="Boutry M."/>
            <person name="Bancroft I."/>
            <person name="Vos P."/>
            <person name="Hoheisel J."/>
            <person name="Zimmermann W."/>
            <person name="Wedler H."/>
            <person name="Ridley P."/>
            <person name="Langham S.-A."/>
            <person name="McCullagh B."/>
            <person name="Bilham L."/>
            <person name="Robben J."/>
            <person name="van der Schueren J."/>
            <person name="Grymonprez B."/>
            <person name="Chuang Y.-J."/>
            <person name="Vandenbussche F."/>
            <person name="Braeken M."/>
            <person name="Weltjens I."/>
            <person name="Voet M."/>
            <person name="Bastiaens I."/>
            <person name="Aert R."/>
            <person name="Defoor E."/>
            <person name="Weitzenegger T."/>
            <person name="Bothe G."/>
            <person name="Ramsperger U."/>
            <person name="Hilbert H."/>
            <person name="Braun M."/>
            <person name="Holzer E."/>
            <person name="Brandt A."/>
            <person name="Peters S."/>
            <person name="van Staveren M."/>
            <person name="Dirkse W."/>
            <person name="Mooijman P."/>
            <person name="Klein Lankhorst R."/>
            <person name="Rose M."/>
            <person name="Hauf J."/>
            <person name="Koetter P."/>
            <person name="Berneiser S."/>
            <person name="Hempel S."/>
            <person name="Feldpausch M."/>
            <person name="Lamberth S."/>
            <person name="Van den Daele H."/>
            <person name="De Keyser A."/>
            <person name="Buysshaert C."/>
            <person name="Gielen J."/>
            <person name="Villarroel R."/>
            <person name="De Clercq R."/>
            <person name="van Montagu M."/>
            <person name="Rogers J."/>
            <person name="Cronin A."/>
            <person name="Quail M.A."/>
            <person name="Bray-Allen S."/>
            <person name="Clark L."/>
            <person name="Doggett J."/>
            <person name="Hall S."/>
            <person name="Kay M."/>
            <person name="Lennard N."/>
            <person name="McLay K."/>
            <person name="Mayes R."/>
            <person name="Pettett A."/>
            <person name="Rajandream M.A."/>
            <person name="Lyne M."/>
            <person name="Benes V."/>
            <person name="Rechmann S."/>
            <person name="Borkova D."/>
            <person name="Bloecker H."/>
            <person name="Scharfe M."/>
            <person name="Grimm M."/>
            <person name="Loehnert T.-H."/>
            <person name="Dose S."/>
            <person name="de Haan M."/>
            <person name="Maarse A.C."/>
            <person name="Schaefer M."/>
            <person name="Mueller-Auer S."/>
            <person name="Gabel C."/>
            <person name="Fuchs M."/>
            <person name="Fartmann B."/>
            <person name="Granderath K."/>
            <person name="Dauner D."/>
            <person name="Herzl A."/>
            <person name="Neumann S."/>
            <person name="Argiriou A."/>
            <person name="Vitale D."/>
            <person name="Liguori R."/>
            <person name="Piravandi E."/>
            <person name="Massenet O."/>
            <person name="Quigley F."/>
            <person name="Clabauld G."/>
            <person name="Muendlein A."/>
            <person name="Felber R."/>
            <person name="Schnabl S."/>
            <person name="Hiller R."/>
            <person name="Schmidt W."/>
            <person name="Lecharny A."/>
            <person name="Aubourg S."/>
            <person name="Chefdor F."/>
            <person name="Cooke R."/>
            <person name="Berger C."/>
            <person name="Monfort A."/>
            <person name="Casacuberta E."/>
            <person name="Gibbons T."/>
            <person name="Weber N."/>
            <person name="Vandenbol M."/>
            <person name="Bargues M."/>
            <person name="Terol J."/>
            <person name="Torres A."/>
            <person name="Perez-Perez A."/>
            <person name="Purnelle B."/>
            <person name="Bent E."/>
            <person name="Johnson S."/>
            <person name="Tacon D."/>
            <person name="Jesse T."/>
            <person name="Heijnen L."/>
            <person name="Schwarz S."/>
            <person name="Scholler P."/>
            <person name="Heber S."/>
            <person name="Francs P."/>
            <person name="Bielke C."/>
            <person name="Frishman D."/>
            <person name="Haase D."/>
            <person name="Lemcke K."/>
            <person name="Mewes H.-W."/>
            <person name="Stocker S."/>
            <person name="Zaccaria P."/>
            <person name="Bevan M."/>
            <person name="Wilson R.K."/>
            <person name="de la Bastide M."/>
            <person name="Habermann K."/>
            <person name="Parnell L."/>
            <person name="Dedhia N."/>
            <person name="Gnoj L."/>
            <person name="Schutz K."/>
            <person name="Huang E."/>
            <person name="Spiegel L."/>
            <person name="Sekhon M."/>
            <person name="Murray J."/>
            <person name="Sheet P."/>
            <person name="Cordes M."/>
            <person name="Abu-Threideh J."/>
            <person name="Stoneking T."/>
            <person name="Kalicki J."/>
            <person name="Graves T."/>
            <person name="Harmon G."/>
            <person name="Edwards J."/>
            <person name="Latreille P."/>
            <person name="Courtney L."/>
            <person name="Cloud J."/>
            <person name="Abbott A."/>
            <person name="Scott K."/>
            <person name="Johnson D."/>
            <person name="Minx P."/>
            <person name="Bentley D."/>
            <person name="Fulton B."/>
            <person name="Miller N."/>
            <person name="Greco T."/>
            <person name="Kemp K."/>
            <person name="Kramer J."/>
            <person name="Fulton L."/>
            <person name="Mardis E."/>
            <person name="Dante M."/>
            <person name="Pepin K."/>
            <person name="Hillier L.W."/>
            <person name="Nelson J."/>
            <person name="Spieth J."/>
            <person name="Ryan E."/>
            <person name="Andrews S."/>
            <person name="Geisel C."/>
            <person name="Layman D."/>
            <person name="Du H."/>
            <person name="Ali J."/>
            <person name="Berghoff A."/>
            <person name="Jones K."/>
            <person name="Drone K."/>
            <person name="Cotton M."/>
            <person name="Joshu C."/>
            <person name="Antonoiu B."/>
            <person name="Zidanic M."/>
            <person name="Strong C."/>
            <person name="Sun H."/>
            <person name="Lamar B."/>
            <person name="Yordan C."/>
            <person name="Ma P."/>
            <person name="Zhong J."/>
            <person name="Preston R."/>
            <person name="Vil D."/>
            <person name="Shekher M."/>
            <person name="Matero A."/>
            <person name="Shah R."/>
            <person name="Swaby I.K."/>
            <person name="O'Shaughnessy A."/>
            <person name="Rodriguez M."/>
            <person name="Hoffman J."/>
            <person name="Till S."/>
            <person name="Granat S."/>
            <person name="Shohdy N."/>
            <person name="Hasegawa A."/>
            <person name="Hameed A."/>
            <person name="Lodhi M."/>
            <person name="Johnson A."/>
            <person name="Chen E."/>
            <person name="Marra M.A."/>
            <person name="Martienssen R."/>
            <person name="McCombie W.R."/>
        </authorList>
    </citation>
    <scope>NUCLEOTIDE SEQUENCE [LARGE SCALE GENOMIC DNA]</scope>
    <source>
        <strain>cv. Columbia</strain>
    </source>
</reference>
<reference key="2">
    <citation type="journal article" date="2017" name="Plant J.">
        <title>Araport11: a complete reannotation of the Arabidopsis thaliana reference genome.</title>
        <authorList>
            <person name="Cheng C.Y."/>
            <person name="Krishnakumar V."/>
            <person name="Chan A.P."/>
            <person name="Thibaud-Nissen F."/>
            <person name="Schobel S."/>
            <person name="Town C.D."/>
        </authorList>
    </citation>
    <scope>GENOME REANNOTATION</scope>
    <source>
        <strain>cv. Columbia</strain>
    </source>
</reference>
<reference key="3">
    <citation type="journal article" date="2004" name="Plant Cell">
        <title>Genome-wide analysis of Arabidopsis pentatricopeptide repeat proteins reveals their essential role in organelle biogenesis.</title>
        <authorList>
            <person name="Lurin C."/>
            <person name="Andres C."/>
            <person name="Aubourg S."/>
            <person name="Bellaoui M."/>
            <person name="Bitton F."/>
            <person name="Bruyere C."/>
            <person name="Caboche M."/>
            <person name="Debast C."/>
            <person name="Gualberto J."/>
            <person name="Hoffmann B."/>
            <person name="Lecharny A."/>
            <person name="Le Ret M."/>
            <person name="Martin-Magniette M.-L."/>
            <person name="Mireau H."/>
            <person name="Peeters N."/>
            <person name="Renou J.-P."/>
            <person name="Szurek B."/>
            <person name="Taconnat L."/>
            <person name="Small I."/>
        </authorList>
    </citation>
    <scope>GENE FAMILY</scope>
</reference>
<keyword id="KW-1185">Reference proteome</keyword>
<keyword id="KW-0677">Repeat</keyword>
<evidence type="ECO:0000305" key="1"/>
<gene>
    <name type="primary">PCMP-E101</name>
    <name type="ordered locus">At4g18840</name>
    <name type="ORF">F13C5.10</name>
</gene>
<feature type="chain" id="PRO_0000363438" description="Pentatricopeptide repeat-containing protein At4g18840">
    <location>
        <begin position="1"/>
        <end position="545"/>
    </location>
</feature>
<feature type="repeat" description="PPR 1">
    <location>
        <begin position="104"/>
        <end position="138"/>
    </location>
</feature>
<feature type="repeat" description="PPR 2">
    <location>
        <begin position="139"/>
        <end position="173"/>
    </location>
</feature>
<feature type="repeat" description="PPR 3">
    <location>
        <begin position="174"/>
        <end position="204"/>
    </location>
</feature>
<feature type="repeat" description="PPR 4">
    <location>
        <begin position="205"/>
        <end position="239"/>
    </location>
</feature>
<feature type="repeat" description="PPR 5">
    <location>
        <begin position="240"/>
        <end position="266"/>
    </location>
</feature>
<feature type="repeat" description="PPR 6">
    <location>
        <begin position="267"/>
        <end position="301"/>
    </location>
</feature>
<feature type="repeat" description="PPR 7">
    <location>
        <begin position="303"/>
        <end position="337"/>
    </location>
</feature>
<feature type="repeat" description="PPR 8">
    <location>
        <begin position="338"/>
        <end position="368"/>
    </location>
</feature>
<feature type="repeat" description="PPR 9">
    <location>
        <begin position="369"/>
        <end position="403"/>
    </location>
</feature>
<feature type="repeat" description="PPR 10">
    <location>
        <begin position="404"/>
        <end position="434"/>
    </location>
</feature>
<feature type="repeat" description="PPR 11">
    <location>
        <begin position="440"/>
        <end position="474"/>
    </location>
</feature>
<feature type="region of interest" description="Type E motif">
    <location>
        <begin position="475"/>
        <end position="545"/>
    </location>
</feature>
<sequence length="545" mass="60842">MVEKDIYMCAEIIIRPQAYNLRLLQKENLKKMSVCSSTPVPILSFTERAKSLTEIQQAHAFMLKTGLFHDTFSASKLVAFAATNPEPKTVSYAHSILNRIGSPNGFTHNSVIRAYANSSTPEVALTVFREMLLGPVFPDKYSFTFVLKACAAFCGFEEGRQIHGLFIKSGLVTDVFVENTLVNVYGRSGYFEIARKVLDRMPVRDAVSWNSLLSAYLEKGLVDEARALFDEMEERNVESWNFMISGYAAAGLVKEAKEVFDSMPVRDVVSWNAMVTAYAHVGCYNEVLEVFNKMLDDSTEKPDGFTLVSVLSACASLGSLSQGEWVHVYIDKHGIEIEGFLATALVDMYSKCGKIDKALEVFRATSKRDVSTWNSIISDLSVHGLGKDALEIFSEMVYEGFKPNGITFIGVLSACNHVGMLDQARKLFEMMSSVYRVEPTIEHYGCMVDLLGRMGKIEEAEELVNEIPADEASILLESLLGACKRFGQLEQAERIANRLLELNLRDSSGYAQMSNLYASDGRWEKVIDGRRNMRAERVNRSLDVA</sequence>
<comment type="similarity">
    <text evidence="1">Belongs to the PPR family. PCMP-E subfamily.</text>
</comment>
<comment type="online information" name="Pentatricopeptide repeat proteins">
    <link uri="https://ppr.plantenergy.uwa.edu.au"/>
</comment>
<protein>
    <recommendedName>
        <fullName>Pentatricopeptide repeat-containing protein At4g18840</fullName>
    </recommendedName>
</protein>
<name>PP321_ARATH</name>
<accession>O49399</accession>
<proteinExistence type="inferred from homology"/>
<organism>
    <name type="scientific">Arabidopsis thaliana</name>
    <name type="common">Mouse-ear cress</name>
    <dbReference type="NCBI Taxonomy" id="3702"/>
    <lineage>
        <taxon>Eukaryota</taxon>
        <taxon>Viridiplantae</taxon>
        <taxon>Streptophyta</taxon>
        <taxon>Embryophyta</taxon>
        <taxon>Tracheophyta</taxon>
        <taxon>Spermatophyta</taxon>
        <taxon>Magnoliopsida</taxon>
        <taxon>eudicotyledons</taxon>
        <taxon>Gunneridae</taxon>
        <taxon>Pentapetalae</taxon>
        <taxon>rosids</taxon>
        <taxon>malvids</taxon>
        <taxon>Brassicales</taxon>
        <taxon>Brassicaceae</taxon>
        <taxon>Camelineae</taxon>
        <taxon>Arabidopsis</taxon>
    </lineage>
</organism>
<dbReference type="EMBL" id="AL021711">
    <property type="protein sequence ID" value="CAA16741.2"/>
    <property type="molecule type" value="Genomic_DNA"/>
</dbReference>
<dbReference type="EMBL" id="AL161549">
    <property type="protein sequence ID" value="CAB78886.1"/>
    <property type="molecule type" value="Genomic_DNA"/>
</dbReference>
<dbReference type="EMBL" id="CP002687">
    <property type="protein sequence ID" value="AEE84097.1"/>
    <property type="molecule type" value="Genomic_DNA"/>
</dbReference>
<dbReference type="EMBL" id="CP002687">
    <property type="protein sequence ID" value="ANM67466.1"/>
    <property type="molecule type" value="Genomic_DNA"/>
</dbReference>
<dbReference type="EMBL" id="CP002687">
    <property type="protein sequence ID" value="ANM67467.1"/>
    <property type="molecule type" value="Genomic_DNA"/>
</dbReference>
<dbReference type="PIR" id="E85212">
    <property type="entry name" value="E85212"/>
</dbReference>
<dbReference type="PIR" id="T05021">
    <property type="entry name" value="T05021"/>
</dbReference>
<dbReference type="RefSeq" id="NP_001319988.1">
    <property type="nucleotide sequence ID" value="NM_001341304.1"/>
</dbReference>
<dbReference type="RefSeq" id="NP_001329295.1">
    <property type="nucleotide sequence ID" value="NM_001341305.1"/>
</dbReference>
<dbReference type="RefSeq" id="NP_193619.1">
    <property type="nucleotide sequence ID" value="NM_118000.1"/>
</dbReference>
<dbReference type="SMR" id="O49399"/>
<dbReference type="FunCoup" id="O49399">
    <property type="interactions" value="2"/>
</dbReference>
<dbReference type="PaxDb" id="3702-AT4G18840.1"/>
<dbReference type="ProteomicsDB" id="248987"/>
<dbReference type="EnsemblPlants" id="AT4G18840.1">
    <property type="protein sequence ID" value="AT4G18840.1"/>
    <property type="gene ID" value="AT4G18840"/>
</dbReference>
<dbReference type="EnsemblPlants" id="AT4G18840.2">
    <property type="protein sequence ID" value="AT4G18840.2"/>
    <property type="gene ID" value="AT4G18840"/>
</dbReference>
<dbReference type="EnsemblPlants" id="AT4G18840.3">
    <property type="protein sequence ID" value="AT4G18840.3"/>
    <property type="gene ID" value="AT4G18840"/>
</dbReference>
<dbReference type="GeneID" id="827618"/>
<dbReference type="Gramene" id="AT4G18840.1">
    <property type="protein sequence ID" value="AT4G18840.1"/>
    <property type="gene ID" value="AT4G18840"/>
</dbReference>
<dbReference type="Gramene" id="AT4G18840.2">
    <property type="protein sequence ID" value="AT4G18840.2"/>
    <property type="gene ID" value="AT4G18840"/>
</dbReference>
<dbReference type="Gramene" id="AT4G18840.3">
    <property type="protein sequence ID" value="AT4G18840.3"/>
    <property type="gene ID" value="AT4G18840"/>
</dbReference>
<dbReference type="KEGG" id="ath:AT4G18840"/>
<dbReference type="Araport" id="AT4G18840"/>
<dbReference type="TAIR" id="AT4G18840"/>
<dbReference type="eggNOG" id="KOG4197">
    <property type="taxonomic scope" value="Eukaryota"/>
</dbReference>
<dbReference type="HOGENOM" id="CLU_002706_0_6_1"/>
<dbReference type="InParanoid" id="O49399"/>
<dbReference type="OMA" id="IQQAHAF"/>
<dbReference type="PhylomeDB" id="O49399"/>
<dbReference type="PRO" id="PR:O49399"/>
<dbReference type="Proteomes" id="UP000006548">
    <property type="component" value="Chromosome 4"/>
</dbReference>
<dbReference type="ExpressionAtlas" id="O49399">
    <property type="expression patterns" value="baseline and differential"/>
</dbReference>
<dbReference type="GO" id="GO:0003723">
    <property type="term" value="F:RNA binding"/>
    <property type="evidence" value="ECO:0007669"/>
    <property type="project" value="InterPro"/>
</dbReference>
<dbReference type="GO" id="GO:0009451">
    <property type="term" value="P:RNA modification"/>
    <property type="evidence" value="ECO:0007669"/>
    <property type="project" value="InterPro"/>
</dbReference>
<dbReference type="FunFam" id="1.25.40.10:FF:001204">
    <property type="entry name" value="Pentatricopeptide (PPR) repeat protein-like"/>
    <property type="match status" value="1"/>
</dbReference>
<dbReference type="FunFam" id="1.25.40.10:FF:001678">
    <property type="entry name" value="Pentatricopeptide repeat-containing protein At2g36730"/>
    <property type="match status" value="1"/>
</dbReference>
<dbReference type="FunFam" id="1.25.40.10:FF:001158">
    <property type="entry name" value="Pentatricopeptide repeat-containing protein At4g18840"/>
    <property type="match status" value="1"/>
</dbReference>
<dbReference type="Gene3D" id="1.25.40.10">
    <property type="entry name" value="Tetratricopeptide repeat domain"/>
    <property type="match status" value="4"/>
</dbReference>
<dbReference type="InterPro" id="IPR046848">
    <property type="entry name" value="E_motif"/>
</dbReference>
<dbReference type="InterPro" id="IPR002885">
    <property type="entry name" value="Pentatricopeptide_rpt"/>
</dbReference>
<dbReference type="InterPro" id="IPR046960">
    <property type="entry name" value="PPR_At4g14850-like_plant"/>
</dbReference>
<dbReference type="InterPro" id="IPR011990">
    <property type="entry name" value="TPR-like_helical_dom_sf"/>
</dbReference>
<dbReference type="NCBIfam" id="TIGR00756">
    <property type="entry name" value="PPR"/>
    <property type="match status" value="3"/>
</dbReference>
<dbReference type="PANTHER" id="PTHR47926">
    <property type="entry name" value="PENTATRICOPEPTIDE REPEAT-CONTAINING PROTEIN"/>
    <property type="match status" value="1"/>
</dbReference>
<dbReference type="PANTHER" id="PTHR47926:SF436">
    <property type="entry name" value="PENTATRICOPEPTIDE REPEAT-CONTAINING PROTEIN ELI1, CHLOROPLASTIC-LIKE ISOFORM X2"/>
    <property type="match status" value="1"/>
</dbReference>
<dbReference type="Pfam" id="PF20431">
    <property type="entry name" value="E_motif"/>
    <property type="match status" value="1"/>
</dbReference>
<dbReference type="Pfam" id="PF01535">
    <property type="entry name" value="PPR"/>
    <property type="match status" value="4"/>
</dbReference>
<dbReference type="Pfam" id="PF13041">
    <property type="entry name" value="PPR_2"/>
    <property type="match status" value="3"/>
</dbReference>
<dbReference type="SUPFAM" id="SSF48452">
    <property type="entry name" value="TPR-like"/>
    <property type="match status" value="2"/>
</dbReference>
<dbReference type="PROSITE" id="PS51375">
    <property type="entry name" value="PPR"/>
    <property type="match status" value="12"/>
</dbReference>